<feature type="chain" id="PRO_1000084971" description="DNA polymerase IV">
    <location>
        <begin position="1"/>
        <end position="352"/>
    </location>
</feature>
<feature type="domain" description="UmuC" evidence="1">
    <location>
        <begin position="4"/>
        <end position="185"/>
    </location>
</feature>
<feature type="active site" evidence="1">
    <location>
        <position position="104"/>
    </location>
</feature>
<feature type="binding site" evidence="1">
    <location>
        <position position="8"/>
    </location>
    <ligand>
        <name>Mg(2+)</name>
        <dbReference type="ChEBI" id="CHEBI:18420"/>
    </ligand>
</feature>
<feature type="binding site" evidence="1">
    <location>
        <position position="103"/>
    </location>
    <ligand>
        <name>Mg(2+)</name>
        <dbReference type="ChEBI" id="CHEBI:18420"/>
    </ligand>
</feature>
<feature type="site" description="Substrate discrimination" evidence="1">
    <location>
        <position position="13"/>
    </location>
</feature>
<sequence>MRKIIHVDMDCFFAAVEMRDDPSLRDIPIAIGGSRDRRGVISTANYPARRYGVRSAMPTAMALKLCPQLKVIPGRMAAYKEASQHIREIFARYTPLIEPLSLDEAYLDVSDCQACSGSATLIAQEIRQAIAMELNLTASAGIAPIKFLAKIASDLNKPNGQYVITPDQVLPFLRDLPLSKIPGVGKVTAKRLQELGLITCSDVQNYSQAELLKRFGKFGHVLWERSHGIDEREVSPDRLRKSVGVEQTLAEDIHDWESCESLIEKLYIELETRLRKVRPDLHIARQGVKLKFHDFQQTTQEHVWPQLNKADLLQVARTAWNERRAGRGVRLVGLHVTLLDPQLERQLLLSWE</sequence>
<comment type="function">
    <text evidence="1">Poorly processive, error-prone DNA polymerase involved in untargeted mutagenesis. Copies undamaged DNA at stalled replication forks, which arise in vivo from mismatched or misaligned primer ends. These misaligned primers can be extended by PolIV. Exhibits no 3'-5' exonuclease (proofreading) activity. May be involved in translesional synthesis, in conjunction with the beta clamp from PolIII.</text>
</comment>
<comment type="catalytic activity">
    <reaction evidence="1">
        <text>DNA(n) + a 2'-deoxyribonucleoside 5'-triphosphate = DNA(n+1) + diphosphate</text>
        <dbReference type="Rhea" id="RHEA:22508"/>
        <dbReference type="Rhea" id="RHEA-COMP:17339"/>
        <dbReference type="Rhea" id="RHEA-COMP:17340"/>
        <dbReference type="ChEBI" id="CHEBI:33019"/>
        <dbReference type="ChEBI" id="CHEBI:61560"/>
        <dbReference type="ChEBI" id="CHEBI:173112"/>
        <dbReference type="EC" id="2.7.7.7"/>
    </reaction>
</comment>
<comment type="cofactor">
    <cofactor evidence="1">
        <name>Mg(2+)</name>
        <dbReference type="ChEBI" id="CHEBI:18420"/>
    </cofactor>
    <text evidence="1">Binds 2 magnesium ions per subunit.</text>
</comment>
<comment type="subunit">
    <text evidence="1">Monomer.</text>
</comment>
<comment type="subcellular location">
    <subcellularLocation>
        <location evidence="1">Cytoplasm</location>
    </subcellularLocation>
</comment>
<comment type="similarity">
    <text evidence="1">Belongs to the DNA polymerase type-Y family.</text>
</comment>
<evidence type="ECO:0000255" key="1">
    <source>
        <dbReference type="HAMAP-Rule" id="MF_01113"/>
    </source>
</evidence>
<keyword id="KW-0963">Cytoplasm</keyword>
<keyword id="KW-0227">DNA damage</keyword>
<keyword id="KW-0234">DNA repair</keyword>
<keyword id="KW-0235">DNA replication</keyword>
<keyword id="KW-0238">DNA-binding</keyword>
<keyword id="KW-0239">DNA-directed DNA polymerase</keyword>
<keyword id="KW-0460">Magnesium</keyword>
<keyword id="KW-0479">Metal-binding</keyword>
<keyword id="KW-0515">Mutator protein</keyword>
<keyword id="KW-0548">Nucleotidyltransferase</keyword>
<keyword id="KW-0808">Transferase</keyword>
<reference key="1">
    <citation type="journal article" date="2006" name="PLoS Genet.">
        <title>The complete genome sequence and comparative genome analysis of the high pathogenicity Yersinia enterocolitica strain 8081.</title>
        <authorList>
            <person name="Thomson N.R."/>
            <person name="Howard S."/>
            <person name="Wren B.W."/>
            <person name="Holden M.T.G."/>
            <person name="Crossman L."/>
            <person name="Challis G.L."/>
            <person name="Churcher C."/>
            <person name="Mungall K."/>
            <person name="Brooks K."/>
            <person name="Chillingworth T."/>
            <person name="Feltwell T."/>
            <person name="Abdellah Z."/>
            <person name="Hauser H."/>
            <person name="Jagels K."/>
            <person name="Maddison M."/>
            <person name="Moule S."/>
            <person name="Sanders M."/>
            <person name="Whitehead S."/>
            <person name="Quail M.A."/>
            <person name="Dougan G."/>
            <person name="Parkhill J."/>
            <person name="Prentice M.B."/>
        </authorList>
    </citation>
    <scope>NUCLEOTIDE SEQUENCE [LARGE SCALE GENOMIC DNA]</scope>
    <source>
        <strain>NCTC 13174 / 8081</strain>
    </source>
</reference>
<gene>
    <name evidence="1" type="primary">dinB</name>
    <name type="ordered locus">YE3207</name>
</gene>
<proteinExistence type="inferred from homology"/>
<organism>
    <name type="scientific">Yersinia enterocolitica serotype O:8 / biotype 1B (strain NCTC 13174 / 8081)</name>
    <dbReference type="NCBI Taxonomy" id="393305"/>
    <lineage>
        <taxon>Bacteria</taxon>
        <taxon>Pseudomonadati</taxon>
        <taxon>Pseudomonadota</taxon>
        <taxon>Gammaproteobacteria</taxon>
        <taxon>Enterobacterales</taxon>
        <taxon>Yersiniaceae</taxon>
        <taxon>Yersinia</taxon>
    </lineage>
</organism>
<name>DPO4_YERE8</name>
<dbReference type="EC" id="2.7.7.7" evidence="1"/>
<dbReference type="EMBL" id="AM286415">
    <property type="protein sequence ID" value="CAL13239.1"/>
    <property type="molecule type" value="Genomic_DNA"/>
</dbReference>
<dbReference type="RefSeq" id="WP_005167525.1">
    <property type="nucleotide sequence ID" value="NC_008800.1"/>
</dbReference>
<dbReference type="RefSeq" id="YP_001007383.1">
    <property type="nucleotide sequence ID" value="NC_008800.1"/>
</dbReference>
<dbReference type="SMR" id="A1JNY3"/>
<dbReference type="KEGG" id="yen:YE3207"/>
<dbReference type="PATRIC" id="fig|393305.7.peg.3411"/>
<dbReference type="eggNOG" id="COG0389">
    <property type="taxonomic scope" value="Bacteria"/>
</dbReference>
<dbReference type="HOGENOM" id="CLU_012348_1_2_6"/>
<dbReference type="OrthoDB" id="9808813at2"/>
<dbReference type="Proteomes" id="UP000000642">
    <property type="component" value="Chromosome"/>
</dbReference>
<dbReference type="GO" id="GO:0005829">
    <property type="term" value="C:cytosol"/>
    <property type="evidence" value="ECO:0007669"/>
    <property type="project" value="TreeGrafter"/>
</dbReference>
<dbReference type="GO" id="GO:0003684">
    <property type="term" value="F:damaged DNA binding"/>
    <property type="evidence" value="ECO:0007669"/>
    <property type="project" value="InterPro"/>
</dbReference>
<dbReference type="GO" id="GO:0003887">
    <property type="term" value="F:DNA-directed DNA polymerase activity"/>
    <property type="evidence" value="ECO:0007669"/>
    <property type="project" value="UniProtKB-UniRule"/>
</dbReference>
<dbReference type="GO" id="GO:0000287">
    <property type="term" value="F:magnesium ion binding"/>
    <property type="evidence" value="ECO:0007669"/>
    <property type="project" value="UniProtKB-UniRule"/>
</dbReference>
<dbReference type="GO" id="GO:0006261">
    <property type="term" value="P:DNA-templated DNA replication"/>
    <property type="evidence" value="ECO:0007669"/>
    <property type="project" value="UniProtKB-UniRule"/>
</dbReference>
<dbReference type="GO" id="GO:0042276">
    <property type="term" value="P:error-prone translesion synthesis"/>
    <property type="evidence" value="ECO:0007669"/>
    <property type="project" value="TreeGrafter"/>
</dbReference>
<dbReference type="GO" id="GO:0009432">
    <property type="term" value="P:SOS response"/>
    <property type="evidence" value="ECO:0007669"/>
    <property type="project" value="TreeGrafter"/>
</dbReference>
<dbReference type="CDD" id="cd03586">
    <property type="entry name" value="PolY_Pol_IV_kappa"/>
    <property type="match status" value="1"/>
</dbReference>
<dbReference type="FunFam" id="1.10.150.20:FF:000019">
    <property type="entry name" value="DNA polymerase IV"/>
    <property type="match status" value="1"/>
</dbReference>
<dbReference type="FunFam" id="3.30.1490.100:FF:000002">
    <property type="entry name" value="DNA polymerase IV"/>
    <property type="match status" value="1"/>
</dbReference>
<dbReference type="FunFam" id="3.30.70.270:FF:000002">
    <property type="entry name" value="DNA polymerase IV"/>
    <property type="match status" value="1"/>
</dbReference>
<dbReference type="FunFam" id="3.40.1170.60:FF:000001">
    <property type="entry name" value="DNA polymerase IV"/>
    <property type="match status" value="1"/>
</dbReference>
<dbReference type="Gene3D" id="3.30.70.270">
    <property type="match status" value="1"/>
</dbReference>
<dbReference type="Gene3D" id="3.40.1170.60">
    <property type="match status" value="1"/>
</dbReference>
<dbReference type="Gene3D" id="1.10.150.20">
    <property type="entry name" value="5' to 3' exonuclease, C-terminal subdomain"/>
    <property type="match status" value="1"/>
</dbReference>
<dbReference type="Gene3D" id="3.30.1490.100">
    <property type="entry name" value="DNA polymerase, Y-family, little finger domain"/>
    <property type="match status" value="1"/>
</dbReference>
<dbReference type="HAMAP" id="MF_01113">
    <property type="entry name" value="DNApol_IV"/>
    <property type="match status" value="1"/>
</dbReference>
<dbReference type="InterPro" id="IPR043502">
    <property type="entry name" value="DNA/RNA_pol_sf"/>
</dbReference>
<dbReference type="InterPro" id="IPR036775">
    <property type="entry name" value="DNA_pol_Y-fam_lit_finger_sf"/>
</dbReference>
<dbReference type="InterPro" id="IPR017961">
    <property type="entry name" value="DNA_pol_Y-fam_little_finger"/>
</dbReference>
<dbReference type="InterPro" id="IPR050116">
    <property type="entry name" value="DNA_polymerase-Y"/>
</dbReference>
<dbReference type="InterPro" id="IPR022880">
    <property type="entry name" value="DNApol_IV"/>
</dbReference>
<dbReference type="InterPro" id="IPR053848">
    <property type="entry name" value="IMS_HHH_1"/>
</dbReference>
<dbReference type="InterPro" id="IPR043128">
    <property type="entry name" value="Rev_trsase/Diguanyl_cyclase"/>
</dbReference>
<dbReference type="InterPro" id="IPR001126">
    <property type="entry name" value="UmuC"/>
</dbReference>
<dbReference type="NCBIfam" id="NF002677">
    <property type="entry name" value="PRK02406.1"/>
    <property type="match status" value="1"/>
</dbReference>
<dbReference type="PANTHER" id="PTHR11076:SF33">
    <property type="entry name" value="DNA POLYMERASE KAPPA"/>
    <property type="match status" value="1"/>
</dbReference>
<dbReference type="PANTHER" id="PTHR11076">
    <property type="entry name" value="DNA REPAIR POLYMERASE UMUC / TRANSFERASE FAMILY MEMBER"/>
    <property type="match status" value="1"/>
</dbReference>
<dbReference type="Pfam" id="PF00817">
    <property type="entry name" value="IMS"/>
    <property type="match status" value="1"/>
</dbReference>
<dbReference type="Pfam" id="PF11799">
    <property type="entry name" value="IMS_C"/>
    <property type="match status" value="1"/>
</dbReference>
<dbReference type="Pfam" id="PF21999">
    <property type="entry name" value="IMS_HHH_1"/>
    <property type="match status" value="1"/>
</dbReference>
<dbReference type="SUPFAM" id="SSF56672">
    <property type="entry name" value="DNA/RNA polymerases"/>
    <property type="match status" value="1"/>
</dbReference>
<dbReference type="SUPFAM" id="SSF100879">
    <property type="entry name" value="Lesion bypass DNA polymerase (Y-family), little finger domain"/>
    <property type="match status" value="1"/>
</dbReference>
<dbReference type="PROSITE" id="PS50173">
    <property type="entry name" value="UMUC"/>
    <property type="match status" value="1"/>
</dbReference>
<protein>
    <recommendedName>
        <fullName evidence="1">DNA polymerase IV</fullName>
        <shortName evidence="1">Pol IV</shortName>
        <ecNumber evidence="1">2.7.7.7</ecNumber>
    </recommendedName>
</protein>
<accession>A1JNY3</accession>